<proteinExistence type="inferred from homology"/>
<comment type="function">
    <text evidence="1">Protein S19 forms a complex with S13 that binds strongly to the 16S ribosomal RNA.</text>
</comment>
<comment type="similarity">
    <text evidence="1">Belongs to the universal ribosomal protein uS19 family.</text>
</comment>
<organism>
    <name type="scientific">Brucella anthropi (strain ATCC 49188 / DSM 6882 / CCUG 24695 / JCM 21032 / LMG 3331 / NBRC 15819 / NCTC 12168 / Alc 37)</name>
    <name type="common">Ochrobactrum anthropi</name>
    <dbReference type="NCBI Taxonomy" id="439375"/>
    <lineage>
        <taxon>Bacteria</taxon>
        <taxon>Pseudomonadati</taxon>
        <taxon>Pseudomonadota</taxon>
        <taxon>Alphaproteobacteria</taxon>
        <taxon>Hyphomicrobiales</taxon>
        <taxon>Brucellaceae</taxon>
        <taxon>Brucella/Ochrobactrum group</taxon>
        <taxon>Brucella</taxon>
    </lineage>
</organism>
<reference key="1">
    <citation type="journal article" date="2011" name="J. Bacteriol.">
        <title>Genome of Ochrobactrum anthropi ATCC 49188 T, a versatile opportunistic pathogen and symbiont of several eukaryotic hosts.</title>
        <authorList>
            <person name="Chain P.S."/>
            <person name="Lang D.M."/>
            <person name="Comerci D.J."/>
            <person name="Malfatti S.A."/>
            <person name="Vergez L.M."/>
            <person name="Shin M."/>
            <person name="Ugalde R.A."/>
            <person name="Garcia E."/>
            <person name="Tolmasky M.E."/>
        </authorList>
    </citation>
    <scope>NUCLEOTIDE SEQUENCE [LARGE SCALE GENOMIC DNA]</scope>
    <source>
        <strain>ATCC 49188 / DSM 6882 / CCUG 24695 / JCM 21032 / LMG 3331 / NBRC 15819 / NCTC 12168 / Alc 37</strain>
    </source>
</reference>
<keyword id="KW-1185">Reference proteome</keyword>
<keyword id="KW-0687">Ribonucleoprotein</keyword>
<keyword id="KW-0689">Ribosomal protein</keyword>
<keyword id="KW-0694">RNA-binding</keyword>
<keyword id="KW-0699">rRNA-binding</keyword>
<name>RS19_BRUA4</name>
<feature type="chain" id="PRO_1000051089" description="Small ribosomal subunit protein uS19">
    <location>
        <begin position="1"/>
        <end position="92"/>
    </location>
</feature>
<sequence length="92" mass="10447">MARSVWKGPFVDGYLLTKAEKVREGGRNEVIKMWSRRSTILPQFVGLTFGVYNGNKHVPVSISEEMVGHKFGEFAPTRTYYGHGADKKSKRK</sequence>
<accession>A6X0C2</accession>
<evidence type="ECO:0000255" key="1">
    <source>
        <dbReference type="HAMAP-Rule" id="MF_00531"/>
    </source>
</evidence>
<evidence type="ECO:0000305" key="2"/>
<protein>
    <recommendedName>
        <fullName evidence="1">Small ribosomal subunit protein uS19</fullName>
    </recommendedName>
    <alternativeName>
        <fullName evidence="2">30S ribosomal protein S19</fullName>
    </alternativeName>
</protein>
<gene>
    <name evidence="1" type="primary">rpsS</name>
    <name type="ordered locus">Oant_1960</name>
</gene>
<dbReference type="EMBL" id="CP000758">
    <property type="protein sequence ID" value="ABS14676.1"/>
    <property type="molecule type" value="Genomic_DNA"/>
</dbReference>
<dbReference type="RefSeq" id="WP_010659917.1">
    <property type="nucleotide sequence ID" value="NC_009667.1"/>
</dbReference>
<dbReference type="SMR" id="A6X0C2"/>
<dbReference type="STRING" id="439375.Oant_1960"/>
<dbReference type="GeneID" id="61317582"/>
<dbReference type="KEGG" id="oan:Oant_1960"/>
<dbReference type="eggNOG" id="COG0185">
    <property type="taxonomic scope" value="Bacteria"/>
</dbReference>
<dbReference type="HOGENOM" id="CLU_144911_0_1_5"/>
<dbReference type="Proteomes" id="UP000002301">
    <property type="component" value="Chromosome 1"/>
</dbReference>
<dbReference type="GO" id="GO:0005737">
    <property type="term" value="C:cytoplasm"/>
    <property type="evidence" value="ECO:0007669"/>
    <property type="project" value="UniProtKB-ARBA"/>
</dbReference>
<dbReference type="GO" id="GO:0015935">
    <property type="term" value="C:small ribosomal subunit"/>
    <property type="evidence" value="ECO:0007669"/>
    <property type="project" value="InterPro"/>
</dbReference>
<dbReference type="GO" id="GO:0019843">
    <property type="term" value="F:rRNA binding"/>
    <property type="evidence" value="ECO:0007669"/>
    <property type="project" value="UniProtKB-UniRule"/>
</dbReference>
<dbReference type="GO" id="GO:0003735">
    <property type="term" value="F:structural constituent of ribosome"/>
    <property type="evidence" value="ECO:0007669"/>
    <property type="project" value="InterPro"/>
</dbReference>
<dbReference type="GO" id="GO:0000028">
    <property type="term" value="P:ribosomal small subunit assembly"/>
    <property type="evidence" value="ECO:0007669"/>
    <property type="project" value="TreeGrafter"/>
</dbReference>
<dbReference type="GO" id="GO:0006412">
    <property type="term" value="P:translation"/>
    <property type="evidence" value="ECO:0007669"/>
    <property type="project" value="UniProtKB-UniRule"/>
</dbReference>
<dbReference type="FunFam" id="3.30.860.10:FF:000001">
    <property type="entry name" value="30S ribosomal protein S19"/>
    <property type="match status" value="1"/>
</dbReference>
<dbReference type="Gene3D" id="3.30.860.10">
    <property type="entry name" value="30s Ribosomal Protein S19, Chain A"/>
    <property type="match status" value="1"/>
</dbReference>
<dbReference type="HAMAP" id="MF_00531">
    <property type="entry name" value="Ribosomal_uS19"/>
    <property type="match status" value="1"/>
</dbReference>
<dbReference type="InterPro" id="IPR002222">
    <property type="entry name" value="Ribosomal_uS19"/>
</dbReference>
<dbReference type="InterPro" id="IPR005732">
    <property type="entry name" value="Ribosomal_uS19_bac-type"/>
</dbReference>
<dbReference type="InterPro" id="IPR020934">
    <property type="entry name" value="Ribosomal_uS19_CS"/>
</dbReference>
<dbReference type="InterPro" id="IPR023575">
    <property type="entry name" value="Ribosomal_uS19_SF"/>
</dbReference>
<dbReference type="NCBIfam" id="TIGR01050">
    <property type="entry name" value="rpsS_bact"/>
    <property type="match status" value="1"/>
</dbReference>
<dbReference type="PANTHER" id="PTHR11880">
    <property type="entry name" value="RIBOSOMAL PROTEIN S19P FAMILY MEMBER"/>
    <property type="match status" value="1"/>
</dbReference>
<dbReference type="PANTHER" id="PTHR11880:SF8">
    <property type="entry name" value="SMALL RIBOSOMAL SUBUNIT PROTEIN US19M"/>
    <property type="match status" value="1"/>
</dbReference>
<dbReference type="Pfam" id="PF00203">
    <property type="entry name" value="Ribosomal_S19"/>
    <property type="match status" value="1"/>
</dbReference>
<dbReference type="PIRSF" id="PIRSF002144">
    <property type="entry name" value="Ribosomal_S19"/>
    <property type="match status" value="1"/>
</dbReference>
<dbReference type="PRINTS" id="PR00975">
    <property type="entry name" value="RIBOSOMALS19"/>
</dbReference>
<dbReference type="SUPFAM" id="SSF54570">
    <property type="entry name" value="Ribosomal protein S19"/>
    <property type="match status" value="1"/>
</dbReference>
<dbReference type="PROSITE" id="PS00323">
    <property type="entry name" value="RIBOSOMAL_S19"/>
    <property type="match status" value="1"/>
</dbReference>